<name>ASCC3_YEAST</name>
<reference key="1">
    <citation type="journal article" date="1997" name="Yeast">
        <title>Identification of gene encoding a putative RNA-helicase, homologous to SKI2, in chromosome VII of Saccharomyces cerevisiae.</title>
        <authorList>
            <person name="Martegani E."/>
            <person name="Vanoni M."/>
            <person name="Mauri I."/>
            <person name="Rudoni S."/>
            <person name="Saliola M."/>
            <person name="Alberghina L."/>
        </authorList>
    </citation>
    <scope>NUCLEOTIDE SEQUENCE [GENOMIC DNA]</scope>
    <source>
        <strain>ATCC 96604 / S288c / FY1679</strain>
    </source>
</reference>
<reference key="2">
    <citation type="journal article" date="1997" name="Nature">
        <title>The nucleotide sequence of Saccharomyces cerevisiae chromosome VII.</title>
        <authorList>
            <person name="Tettelin H."/>
            <person name="Agostoni-Carbone M.L."/>
            <person name="Albermann K."/>
            <person name="Albers M."/>
            <person name="Arroyo J."/>
            <person name="Backes U."/>
            <person name="Barreiros T."/>
            <person name="Bertani I."/>
            <person name="Bjourson A.J."/>
            <person name="Brueckner M."/>
            <person name="Bruschi C.V."/>
            <person name="Carignani G."/>
            <person name="Castagnoli L."/>
            <person name="Cerdan E."/>
            <person name="Clemente M.L."/>
            <person name="Coblenz A."/>
            <person name="Coglievina M."/>
            <person name="Coissac E."/>
            <person name="Defoor E."/>
            <person name="Del Bino S."/>
            <person name="Delius H."/>
            <person name="Delneri D."/>
            <person name="de Wergifosse P."/>
            <person name="Dujon B."/>
            <person name="Durand P."/>
            <person name="Entian K.-D."/>
            <person name="Eraso P."/>
            <person name="Escribano V."/>
            <person name="Fabiani L."/>
            <person name="Fartmann B."/>
            <person name="Feroli F."/>
            <person name="Feuermann M."/>
            <person name="Frontali L."/>
            <person name="Garcia-Gonzalez M."/>
            <person name="Garcia-Saez M.I."/>
            <person name="Goffeau A."/>
            <person name="Guerreiro P."/>
            <person name="Hani J."/>
            <person name="Hansen M."/>
            <person name="Hebling U."/>
            <person name="Hernandez K."/>
            <person name="Heumann K."/>
            <person name="Hilger F."/>
            <person name="Hofmann B."/>
            <person name="Indge K.J."/>
            <person name="James C.M."/>
            <person name="Klima R."/>
            <person name="Koetter P."/>
            <person name="Kramer B."/>
            <person name="Kramer W."/>
            <person name="Lauquin G."/>
            <person name="Leuther H."/>
            <person name="Louis E.J."/>
            <person name="Maillier E."/>
            <person name="Marconi A."/>
            <person name="Martegani E."/>
            <person name="Mazon M.J."/>
            <person name="Mazzoni C."/>
            <person name="McReynolds A.D.K."/>
            <person name="Melchioretto P."/>
            <person name="Mewes H.-W."/>
            <person name="Minenkova O."/>
            <person name="Mueller-Auer S."/>
            <person name="Nawrocki A."/>
            <person name="Netter P."/>
            <person name="Neu R."/>
            <person name="Nombela C."/>
            <person name="Oliver S.G."/>
            <person name="Panzeri L."/>
            <person name="Paoluzi S."/>
            <person name="Plevani P."/>
            <person name="Portetelle D."/>
            <person name="Portillo F."/>
            <person name="Potier S."/>
            <person name="Purnelle B."/>
            <person name="Rieger M."/>
            <person name="Riles L."/>
            <person name="Rinaldi T."/>
            <person name="Robben J."/>
            <person name="Rodrigues-Pousada C."/>
            <person name="Rodriguez-Belmonte E."/>
            <person name="Rodriguez-Torres A.M."/>
            <person name="Rose M."/>
            <person name="Ruzzi M."/>
            <person name="Saliola M."/>
            <person name="Sanchez-Perez M."/>
            <person name="Schaefer B."/>
            <person name="Schaefer M."/>
            <person name="Scharfe M."/>
            <person name="Schmidheini T."/>
            <person name="Schreer A."/>
            <person name="Skala J."/>
            <person name="Souciet J.-L."/>
            <person name="Steensma H.Y."/>
            <person name="Talla E."/>
            <person name="Thierry A."/>
            <person name="Vandenbol M."/>
            <person name="van der Aart Q.J.M."/>
            <person name="Van Dyck L."/>
            <person name="Vanoni M."/>
            <person name="Verhasselt P."/>
            <person name="Voet M."/>
            <person name="Volckaert G."/>
            <person name="Wambutt R."/>
            <person name="Watson M.D."/>
            <person name="Weber N."/>
            <person name="Wedler E."/>
            <person name="Wedler H."/>
            <person name="Wipfli P."/>
            <person name="Wolf K."/>
            <person name="Wright L.F."/>
            <person name="Zaccaria P."/>
            <person name="Zimmermann M."/>
            <person name="Zollner A."/>
            <person name="Kleine K."/>
        </authorList>
    </citation>
    <scope>NUCLEOTIDE SEQUENCE [LARGE SCALE GENOMIC DNA]</scope>
    <source>
        <strain>ATCC 204508 / S288c</strain>
    </source>
</reference>
<reference key="3">
    <citation type="journal article" date="2014" name="G3 (Bethesda)">
        <title>The reference genome sequence of Saccharomyces cerevisiae: Then and now.</title>
        <authorList>
            <person name="Engel S.R."/>
            <person name="Dietrich F.S."/>
            <person name="Fisk D.G."/>
            <person name="Binkley G."/>
            <person name="Balakrishnan R."/>
            <person name="Costanzo M.C."/>
            <person name="Dwight S.S."/>
            <person name="Hitz B.C."/>
            <person name="Karra K."/>
            <person name="Nash R.S."/>
            <person name="Weng S."/>
            <person name="Wong E.D."/>
            <person name="Lloyd P."/>
            <person name="Skrzypek M.S."/>
            <person name="Miyasato S.R."/>
            <person name="Simison M."/>
            <person name="Cherry J.M."/>
        </authorList>
    </citation>
    <scope>GENOME REANNOTATION</scope>
    <scope>SEQUENCE REVISION TO 51; 193 AND 438</scope>
    <source>
        <strain>ATCC 204508 / S288c</strain>
    </source>
</reference>
<reference key="4">
    <citation type="journal article" date="2000" name="Proc. Natl. Acad. Sci. U.S.A.">
        <title>3' poly(A) is dispensable for translation.</title>
        <authorList>
            <person name="Searfoss A.M."/>
            <person name="Wickner R.B."/>
        </authorList>
    </citation>
    <scope>FUNCTION</scope>
</reference>
<reference key="5">
    <citation type="journal article" date="2001" name="Mol. Cell. Biol.">
        <title>Linking the 3' poly(A) tail to the subunit joining step of translation initiation: relations of Pab1p, eukaryotic translation initiation factor 5b (Fun12p), and Ski2p-Slh1p.</title>
        <authorList>
            <person name="Searfoss A."/>
            <person name="Dever T.E."/>
            <person name="Wickner R."/>
        </authorList>
    </citation>
    <scope>FUNCTION</scope>
</reference>
<reference key="6">
    <citation type="journal article" date="2003" name="Nature">
        <title>Global analysis of protein localization in budding yeast.</title>
        <authorList>
            <person name="Huh W.-K."/>
            <person name="Falvo J.V."/>
            <person name="Gerke L.C."/>
            <person name="Carroll A.S."/>
            <person name="Howson R.W."/>
            <person name="Weissman J.S."/>
            <person name="O'Shea E.K."/>
        </authorList>
    </citation>
    <scope>SUBCELLULAR LOCATION [LARGE SCALE ANALYSIS]</scope>
</reference>
<reference key="7">
    <citation type="journal article" date="2003" name="Nature">
        <title>Global analysis of protein expression in yeast.</title>
        <authorList>
            <person name="Ghaemmaghami S."/>
            <person name="Huh W.-K."/>
            <person name="Bower K."/>
            <person name="Howson R.W."/>
            <person name="Belle A."/>
            <person name="Dephoure N."/>
            <person name="O'Shea E.K."/>
            <person name="Weissman J.S."/>
        </authorList>
    </citation>
    <scope>LEVEL OF PROTEIN EXPRESSION [LARGE SCALE ANALYSIS]</scope>
</reference>
<reference key="8">
    <citation type="journal article" date="2017" name="Nat. Commun.">
        <title>Ubiquitination of stalled ribosome triggers ribosome-associated quality control.</title>
        <authorList>
            <person name="Matsuo Y."/>
            <person name="Ikeuchi K."/>
            <person name="Saeki Y."/>
            <person name="Iwasaki S."/>
            <person name="Schmidt C."/>
            <person name="Udagawa T."/>
            <person name="Sato F."/>
            <person name="Tsuchiya H."/>
            <person name="Becker T."/>
            <person name="Tanaka K."/>
            <person name="Ingolia N.T."/>
            <person name="Beckmann R."/>
            <person name="Inada T."/>
        </authorList>
    </citation>
    <scope>FUNCTION</scope>
    <scope>CATALYTIC ACTIVITY</scope>
    <scope>IDENTIFICATION IN THE RQT COMPLEX</scope>
    <scope>INTERACTION WITH CUE3; RQT4 AND HEL2</scope>
    <scope>DISRUPTION PHENOTYPE</scope>
    <scope>MUTAGENESIS OF LYS-316</scope>
</reference>
<reference key="9">
    <citation type="journal article" date="2017" name="RNA">
        <title>Asc1, Hel2, and Slh1 couple translation arrest to nascent chain degradation.</title>
        <authorList>
            <person name="Sitron C.S."/>
            <person name="Park J.H."/>
            <person name="Brandman O."/>
        </authorList>
    </citation>
    <scope>FUNCTION</scope>
    <scope>INTERACTION WITH HEL2</scope>
    <scope>DISRUPTION PHENOTYPE</scope>
</reference>
<reference key="10">
    <citation type="journal article" date="2019" name="Cell Rep.">
        <title>Sequential ubiquitination of ribosomal protein uS3 triggers the degradation of non-functional 18S rRNA.</title>
        <authorList>
            <person name="Sugiyama T."/>
            <person name="Li S."/>
            <person name="Kato M."/>
            <person name="Ikeuchi K."/>
            <person name="Ichimura A."/>
            <person name="Matsuo Y."/>
            <person name="Inada T."/>
        </authorList>
    </citation>
    <scope>FUNCTION</scope>
    <scope>CATALYTIC ACTIVITY</scope>
    <scope>MUTAGENESIS OF LYS-316</scope>
</reference>
<reference key="11">
    <citation type="journal article" date="2020" name="Nat. Struct. Mol. Biol.">
        <title>RQT complex dissociates ribosomes collided on endogenous RQC substrate SDD1.</title>
        <authorList>
            <person name="Matsuo Y."/>
            <person name="Tesina P."/>
            <person name="Nakajima S."/>
            <person name="Mizuno M."/>
            <person name="Endo A."/>
            <person name="Buschauer R."/>
            <person name="Cheng J."/>
            <person name="Shounai O."/>
            <person name="Ikeuchi K."/>
            <person name="Saeki Y."/>
            <person name="Becker T."/>
            <person name="Beckmann R."/>
            <person name="Inada T."/>
        </authorList>
    </citation>
    <scope>FUNCTION</scope>
    <scope>CATALYTIC ACTIVITY</scope>
    <scope>IDENTIFICATION IN THE RQT COMPLEX</scope>
    <scope>MUTAGENESIS OF LYS-316</scope>
</reference>
<accession>P53327</accession>
<accession>D6VV48</accession>
<keyword id="KW-0002">3D-structure</keyword>
<keyword id="KW-0051">Antiviral defense</keyword>
<keyword id="KW-0067">ATP-binding</keyword>
<keyword id="KW-0963">Cytoplasm</keyword>
<keyword id="KW-0347">Helicase</keyword>
<keyword id="KW-0378">Hydrolase</keyword>
<keyword id="KW-0547">Nucleotide-binding</keyword>
<keyword id="KW-1185">Reference proteome</keyword>
<keyword id="KW-0677">Repeat</keyword>
<feature type="chain" id="PRO_0000102085" description="RQC trigger complex helicase SLH1">
    <location>
        <begin position="1"/>
        <end position="1967"/>
    </location>
</feature>
<feature type="domain" description="Helicase ATP-binding 1" evidence="1">
    <location>
        <begin position="297"/>
        <end position="485"/>
    </location>
</feature>
<feature type="domain" description="Helicase C-terminal 1" evidence="2">
    <location>
        <begin position="516"/>
        <end position="735"/>
    </location>
</feature>
<feature type="domain" description="SEC63 1">
    <location>
        <begin position="795"/>
        <end position="1100"/>
    </location>
</feature>
<feature type="domain" description="Helicase ATP-binding 2" evidence="1">
    <location>
        <begin position="1149"/>
        <end position="1324"/>
    </location>
</feature>
<feature type="domain" description="Helicase C-terminal 2" evidence="2">
    <location>
        <begin position="1355"/>
        <end position="1550"/>
    </location>
</feature>
<feature type="domain" description="SEC63 2">
    <location>
        <begin position="1626"/>
        <end position="1776"/>
    </location>
</feature>
<feature type="short sequence motif" description="DEVH box">
    <location>
        <begin position="427"/>
        <end position="430"/>
    </location>
</feature>
<feature type="short sequence motif" description="DEAH box">
    <location>
        <begin position="1266"/>
        <end position="1269"/>
    </location>
</feature>
<feature type="binding site" evidence="1">
    <location>
        <begin position="310"/>
        <end position="317"/>
    </location>
    <ligand>
        <name>ATP</name>
        <dbReference type="ChEBI" id="CHEBI:30616"/>
    </ligand>
</feature>
<feature type="binding site" evidence="1">
    <location>
        <begin position="1162"/>
        <end position="1169"/>
    </location>
    <ligand>
        <name>ATP</name>
        <dbReference type="ChEBI" id="CHEBI:30616"/>
    </ligand>
</feature>
<feature type="mutagenesis site" description="Abolishes splitting of stalled ribosomes. Defective activation of the ribosome quality control (RQC) pathway. Does not affect the association of the RQT complex with ribosomes." evidence="8 9 10">
    <original>K</original>
    <variation>R</variation>
    <location>
        <position position="316"/>
    </location>
</feature>
<feature type="sequence conflict" description="In Ref. 1; AAC49699." evidence="13" ref="1">
    <original>F</original>
    <variation>L</variation>
    <location>
        <position position="27"/>
    </location>
</feature>
<feature type="sequence conflict" description="In Ref. 1; AAC49699 and 2; CAA97301." evidence="13" ref="1 2">
    <original>Q</original>
    <variation>P</variation>
    <location>
        <position position="51"/>
    </location>
</feature>
<feature type="sequence conflict" description="In Ref. 1; AAC49699 and 2; CAA97301." evidence="13" ref="1 2">
    <original>K</original>
    <variation>E</variation>
    <location>
        <position position="193"/>
    </location>
</feature>
<feature type="sequence conflict" description="In Ref. 1; AAC49699 and 2; CAA97301." evidence="13" ref="1 2">
    <original>S</original>
    <variation>P</variation>
    <location>
        <position position="438"/>
    </location>
</feature>
<dbReference type="EC" id="3.6.4.13" evidence="14 15 16"/>
<dbReference type="EMBL" id="U35242">
    <property type="protein sequence ID" value="AAC49699.1"/>
    <property type="molecule type" value="Genomic_DNA"/>
</dbReference>
<dbReference type="EMBL" id="Z73056">
    <property type="protein sequence ID" value="CAA97301.1"/>
    <property type="molecule type" value="Genomic_DNA"/>
</dbReference>
<dbReference type="EMBL" id="BK006941">
    <property type="protein sequence ID" value="DAA08359.2"/>
    <property type="molecule type" value="Genomic_DNA"/>
</dbReference>
<dbReference type="PIR" id="S64604">
    <property type="entry name" value="S64604"/>
</dbReference>
<dbReference type="RefSeq" id="NP_011787.4">
    <property type="nucleotide sequence ID" value="NM_001181400.4"/>
</dbReference>
<dbReference type="PDB" id="7ZPQ">
    <property type="method" value="EM"/>
    <property type="resolution" value="3.47 A"/>
    <property type="chains" value="CA=1-1967"/>
</dbReference>
<dbReference type="PDB" id="7ZRS">
    <property type="method" value="EM"/>
    <property type="resolution" value="4.80 A"/>
    <property type="chains" value="CA=1-1967"/>
</dbReference>
<dbReference type="PDB" id="7ZUW">
    <property type="method" value="EM"/>
    <property type="resolution" value="4.30 A"/>
    <property type="chains" value="CA=1-1967"/>
</dbReference>
<dbReference type="PDBsum" id="7ZPQ"/>
<dbReference type="PDBsum" id="7ZRS"/>
<dbReference type="PDBsum" id="7ZUW"/>
<dbReference type="EMDB" id="EMD-14921"/>
<dbReference type="EMDB" id="EMD-14978"/>
<dbReference type="SMR" id="P53327"/>
<dbReference type="BioGRID" id="33520">
    <property type="interactions" value="171"/>
</dbReference>
<dbReference type="ComplexPortal" id="CPX-6643">
    <property type="entry name" value="RQT ribosome-associated quality control trigger complex"/>
</dbReference>
<dbReference type="DIP" id="DIP-5563N"/>
<dbReference type="FunCoup" id="P53327">
    <property type="interactions" value="751"/>
</dbReference>
<dbReference type="IntAct" id="P53327">
    <property type="interactions" value="13"/>
</dbReference>
<dbReference type="MINT" id="P53327"/>
<dbReference type="STRING" id="4932.YGR271W"/>
<dbReference type="iPTMnet" id="P53327"/>
<dbReference type="PaxDb" id="4932-YGR271W"/>
<dbReference type="PeptideAtlas" id="P53327"/>
<dbReference type="EnsemblFungi" id="YGR271W_mRNA">
    <property type="protein sequence ID" value="YGR271W"/>
    <property type="gene ID" value="YGR271W"/>
</dbReference>
<dbReference type="GeneID" id="853187"/>
<dbReference type="KEGG" id="sce:YGR271W"/>
<dbReference type="AGR" id="SGD:S000003503"/>
<dbReference type="SGD" id="S000003503">
    <property type="gene designation" value="SLH1"/>
</dbReference>
<dbReference type="VEuPathDB" id="FungiDB:YGR271W"/>
<dbReference type="eggNOG" id="KOG0952">
    <property type="taxonomic scope" value="Eukaryota"/>
</dbReference>
<dbReference type="GeneTree" id="ENSGT00940000155377"/>
<dbReference type="HOGENOM" id="CLU_000335_1_0_1"/>
<dbReference type="InParanoid" id="P53327"/>
<dbReference type="OMA" id="MCSATEF"/>
<dbReference type="OrthoDB" id="5575at2759"/>
<dbReference type="BioCyc" id="YEAST:G3O-30937-MONOMER"/>
<dbReference type="BioGRID-ORCS" id="853187">
    <property type="hits" value="0 hits in 10 CRISPR screens"/>
</dbReference>
<dbReference type="CD-CODE" id="E03F929F">
    <property type="entry name" value="Stress granule"/>
</dbReference>
<dbReference type="PRO" id="PR:P53327"/>
<dbReference type="Proteomes" id="UP000002311">
    <property type="component" value="Chromosome VII"/>
</dbReference>
<dbReference type="RNAct" id="P53327">
    <property type="molecule type" value="protein"/>
</dbReference>
<dbReference type="GO" id="GO:0005737">
    <property type="term" value="C:cytoplasm"/>
    <property type="evidence" value="ECO:0007005"/>
    <property type="project" value="SGD"/>
</dbReference>
<dbReference type="GO" id="GO:0010494">
    <property type="term" value="C:cytoplasmic stress granule"/>
    <property type="evidence" value="ECO:0007005"/>
    <property type="project" value="SGD"/>
</dbReference>
<dbReference type="GO" id="GO:0022626">
    <property type="term" value="C:cytosolic ribosome"/>
    <property type="evidence" value="ECO:0000314"/>
    <property type="project" value="UniProt"/>
</dbReference>
<dbReference type="GO" id="GO:0005524">
    <property type="term" value="F:ATP binding"/>
    <property type="evidence" value="ECO:0007669"/>
    <property type="project" value="UniProtKB-KW"/>
</dbReference>
<dbReference type="GO" id="GO:0016887">
    <property type="term" value="F:ATP hydrolysis activity"/>
    <property type="evidence" value="ECO:0000314"/>
    <property type="project" value="UniProtKB"/>
</dbReference>
<dbReference type="GO" id="GO:0004386">
    <property type="term" value="F:helicase activity"/>
    <property type="evidence" value="ECO:0000315"/>
    <property type="project" value="UniProtKB"/>
</dbReference>
<dbReference type="GO" id="GO:0003729">
    <property type="term" value="F:mRNA binding"/>
    <property type="evidence" value="ECO:0007005"/>
    <property type="project" value="SGD"/>
</dbReference>
<dbReference type="GO" id="GO:0003724">
    <property type="term" value="F:RNA helicase activity"/>
    <property type="evidence" value="ECO:0000250"/>
    <property type="project" value="SGD"/>
</dbReference>
<dbReference type="GO" id="GO:0002181">
    <property type="term" value="P:cytoplasmic translation"/>
    <property type="evidence" value="ECO:0000316"/>
    <property type="project" value="SGD"/>
</dbReference>
<dbReference type="GO" id="GO:0051607">
    <property type="term" value="P:defense response to virus"/>
    <property type="evidence" value="ECO:0007669"/>
    <property type="project" value="UniProtKB-KW"/>
</dbReference>
<dbReference type="GO" id="GO:0006417">
    <property type="term" value="P:regulation of translation"/>
    <property type="evidence" value="ECO:0000315"/>
    <property type="project" value="SGD"/>
</dbReference>
<dbReference type="GO" id="GO:0072344">
    <property type="term" value="P:rescue of stalled ribosome"/>
    <property type="evidence" value="ECO:0000314"/>
    <property type="project" value="UniProt"/>
</dbReference>
<dbReference type="GO" id="GO:0032790">
    <property type="term" value="P:ribosome disassembly"/>
    <property type="evidence" value="ECO:0000314"/>
    <property type="project" value="UniProtKB"/>
</dbReference>
<dbReference type="GO" id="GO:1990116">
    <property type="term" value="P:ribosome-associated ubiquitin-dependent protein catabolic process"/>
    <property type="evidence" value="ECO:0000315"/>
    <property type="project" value="UniProtKB"/>
</dbReference>
<dbReference type="CDD" id="cd18020">
    <property type="entry name" value="DEXHc_ASCC3_1"/>
    <property type="match status" value="1"/>
</dbReference>
<dbReference type="CDD" id="cd18022">
    <property type="entry name" value="DEXHc_ASCC3_2"/>
    <property type="match status" value="1"/>
</dbReference>
<dbReference type="CDD" id="cd18795">
    <property type="entry name" value="SF2_C_Ski2"/>
    <property type="match status" value="2"/>
</dbReference>
<dbReference type="FunFam" id="3.40.50.300:FF:000198">
    <property type="entry name" value="Activating signal cointegrator 1 complex subunit"/>
    <property type="match status" value="1"/>
</dbReference>
<dbReference type="FunFam" id="1.10.3380.10:FF:000002">
    <property type="entry name" value="Activating signal cointegrator 1 complex subunit 3"/>
    <property type="match status" value="1"/>
</dbReference>
<dbReference type="FunFam" id="3.40.50.300:FF:000231">
    <property type="entry name" value="Activating signal cointegrator 1 complex subunit 3"/>
    <property type="match status" value="1"/>
</dbReference>
<dbReference type="FunFam" id="2.60.40.150:FF:000241">
    <property type="entry name" value="Antiviral helicase SLH1"/>
    <property type="match status" value="1"/>
</dbReference>
<dbReference type="FunFam" id="3.40.50.300:FF:000102">
    <property type="entry name" value="RNA helicase, activating signal cointegrator 1"/>
    <property type="match status" value="1"/>
</dbReference>
<dbReference type="FunFam" id="1.10.10.10:FF:000012">
    <property type="entry name" value="U5 small nuclear ribonucleoprotein helicase"/>
    <property type="match status" value="1"/>
</dbReference>
<dbReference type="FunFam" id="1.10.10.10:FF:000024">
    <property type="entry name" value="U5 small nuclear ribonucleoprotein helicase"/>
    <property type="match status" value="1"/>
</dbReference>
<dbReference type="FunFam" id="1.10.150.20:FF:000004">
    <property type="entry name" value="U5 small nuclear ribonucleoprotein helicase"/>
    <property type="match status" value="1"/>
</dbReference>
<dbReference type="FunFam" id="1.10.3380.10:FF:000001">
    <property type="entry name" value="U5 small nuclear ribonucleoprotein helicase"/>
    <property type="match status" value="1"/>
</dbReference>
<dbReference type="FunFam" id="3.40.50.300:FF:000062">
    <property type="entry name" value="U5 small nuclear ribonucleoprotein helicase"/>
    <property type="match status" value="1"/>
</dbReference>
<dbReference type="Gene3D" id="1.10.150.20">
    <property type="entry name" value="5' to 3' exonuclease, C-terminal subdomain"/>
    <property type="match status" value="1"/>
</dbReference>
<dbReference type="Gene3D" id="2.60.40.150">
    <property type="entry name" value="C2 domain"/>
    <property type="match status" value="1"/>
</dbReference>
<dbReference type="Gene3D" id="3.40.50.300">
    <property type="entry name" value="P-loop containing nucleotide triphosphate hydrolases"/>
    <property type="match status" value="4"/>
</dbReference>
<dbReference type="Gene3D" id="1.10.3380.10">
    <property type="entry name" value="Sec63 N-terminal domain-like domain"/>
    <property type="match status" value="2"/>
</dbReference>
<dbReference type="Gene3D" id="1.10.10.10">
    <property type="entry name" value="Winged helix-like DNA-binding domain superfamily/Winged helix DNA-binding domain"/>
    <property type="match status" value="2"/>
</dbReference>
<dbReference type="InterPro" id="IPR003593">
    <property type="entry name" value="AAA+_ATPase"/>
</dbReference>
<dbReference type="InterPro" id="IPR035892">
    <property type="entry name" value="C2_domain_sf"/>
</dbReference>
<dbReference type="InterPro" id="IPR011545">
    <property type="entry name" value="DEAD/DEAH_box_helicase_dom"/>
</dbReference>
<dbReference type="InterPro" id="IPR050474">
    <property type="entry name" value="Hel308_SKI2-like"/>
</dbReference>
<dbReference type="InterPro" id="IPR014001">
    <property type="entry name" value="Helicase_ATP-bd"/>
</dbReference>
<dbReference type="InterPro" id="IPR001650">
    <property type="entry name" value="Helicase_C-like"/>
</dbReference>
<dbReference type="InterPro" id="IPR027417">
    <property type="entry name" value="P-loop_NTPase"/>
</dbReference>
<dbReference type="InterPro" id="IPR004179">
    <property type="entry name" value="Sec63-dom"/>
</dbReference>
<dbReference type="InterPro" id="IPR036388">
    <property type="entry name" value="WH-like_DNA-bd_sf"/>
</dbReference>
<dbReference type="InterPro" id="IPR036390">
    <property type="entry name" value="WH_DNA-bd_sf"/>
</dbReference>
<dbReference type="PANTHER" id="PTHR47961:SF13">
    <property type="entry name" value="ACTIVATING SIGNAL COINTEGRATOR 1 COMPLEX SUBUNIT 3"/>
    <property type="match status" value="1"/>
</dbReference>
<dbReference type="PANTHER" id="PTHR47961">
    <property type="entry name" value="DNA POLYMERASE THETA, PUTATIVE (AFU_ORTHOLOGUE AFUA_1G05260)-RELATED"/>
    <property type="match status" value="1"/>
</dbReference>
<dbReference type="Pfam" id="PF00270">
    <property type="entry name" value="DEAD"/>
    <property type="match status" value="2"/>
</dbReference>
<dbReference type="Pfam" id="PF00271">
    <property type="entry name" value="Helicase_C"/>
    <property type="match status" value="2"/>
</dbReference>
<dbReference type="Pfam" id="PF02889">
    <property type="entry name" value="Sec63"/>
    <property type="match status" value="2"/>
</dbReference>
<dbReference type="Pfam" id="PF23445">
    <property type="entry name" value="SNRNP200_wHTH"/>
    <property type="match status" value="2"/>
</dbReference>
<dbReference type="PIRSF" id="PIRSF039073">
    <property type="entry name" value="BRR2"/>
    <property type="match status" value="1"/>
</dbReference>
<dbReference type="SMART" id="SM00382">
    <property type="entry name" value="AAA"/>
    <property type="match status" value="2"/>
</dbReference>
<dbReference type="SMART" id="SM00487">
    <property type="entry name" value="DEXDc"/>
    <property type="match status" value="2"/>
</dbReference>
<dbReference type="SMART" id="SM00490">
    <property type="entry name" value="HELICc"/>
    <property type="match status" value="2"/>
</dbReference>
<dbReference type="SMART" id="SM00973">
    <property type="entry name" value="Sec63"/>
    <property type="match status" value="2"/>
</dbReference>
<dbReference type="SUPFAM" id="SSF52540">
    <property type="entry name" value="P-loop containing nucleoside triphosphate hydrolases"/>
    <property type="match status" value="4"/>
</dbReference>
<dbReference type="SUPFAM" id="SSF158702">
    <property type="entry name" value="Sec63 N-terminal domain-like"/>
    <property type="match status" value="2"/>
</dbReference>
<dbReference type="SUPFAM" id="SSF46785">
    <property type="entry name" value="Winged helix' DNA-binding domain"/>
    <property type="match status" value="2"/>
</dbReference>
<dbReference type="PROSITE" id="PS51192">
    <property type="entry name" value="HELICASE_ATP_BIND_1"/>
    <property type="match status" value="2"/>
</dbReference>
<dbReference type="PROSITE" id="PS51194">
    <property type="entry name" value="HELICASE_CTER"/>
    <property type="match status" value="2"/>
</dbReference>
<organism>
    <name type="scientific">Saccharomyces cerevisiae (strain ATCC 204508 / S288c)</name>
    <name type="common">Baker's yeast</name>
    <dbReference type="NCBI Taxonomy" id="559292"/>
    <lineage>
        <taxon>Eukaryota</taxon>
        <taxon>Fungi</taxon>
        <taxon>Dikarya</taxon>
        <taxon>Ascomycota</taxon>
        <taxon>Saccharomycotina</taxon>
        <taxon>Saccharomycetes</taxon>
        <taxon>Saccharomycetales</taxon>
        <taxon>Saccharomycetaceae</taxon>
        <taxon>Saccharomyces</taxon>
    </lineage>
</organism>
<protein>
    <recommendedName>
        <fullName evidence="12">RQC trigger complex helicase SLH1</fullName>
        <ecNumber evidence="14 15 16">3.6.4.13</ecNumber>
    </recommendedName>
    <alternativeName>
        <fullName>Antiviral helicase SLH1</fullName>
    </alternativeName>
    <alternativeName>
        <fullName>SKI2-like helicase 1</fullName>
    </alternativeName>
</protein>
<gene>
    <name evidence="11" type="primary">SLH1</name>
    <name evidence="12" type="synonym">RQT2</name>
    <name evidence="17" type="ordered locus">YGR271W</name>
    <name type="ORF">G9365</name>
</gene>
<evidence type="ECO:0000255" key="1">
    <source>
        <dbReference type="PROSITE-ProRule" id="PRU00541"/>
    </source>
</evidence>
<evidence type="ECO:0000255" key="2">
    <source>
        <dbReference type="PROSITE-ProRule" id="PRU00542"/>
    </source>
</evidence>
<evidence type="ECO:0000269" key="3">
    <source>
    </source>
</evidence>
<evidence type="ECO:0000269" key="4">
    <source>
    </source>
</evidence>
<evidence type="ECO:0000269" key="5">
    <source>
    </source>
</evidence>
<evidence type="ECO:0000269" key="6">
    <source>
    </source>
</evidence>
<evidence type="ECO:0000269" key="7">
    <source>
    </source>
</evidence>
<evidence type="ECO:0000269" key="8">
    <source>
    </source>
</evidence>
<evidence type="ECO:0000269" key="9">
    <source>
    </source>
</evidence>
<evidence type="ECO:0000269" key="10">
    <source>
    </source>
</evidence>
<evidence type="ECO:0000303" key="11">
    <source>
    </source>
</evidence>
<evidence type="ECO:0000303" key="12">
    <source>
    </source>
</evidence>
<evidence type="ECO:0000305" key="13"/>
<evidence type="ECO:0000305" key="14">
    <source>
    </source>
</evidence>
<evidence type="ECO:0000305" key="15">
    <source>
    </source>
</evidence>
<evidence type="ECO:0000305" key="16">
    <source>
    </source>
</evidence>
<evidence type="ECO:0000312" key="17">
    <source>
        <dbReference type="SGD" id="S000003503"/>
    </source>
</evidence>
<sequence>MSTEYSADSSKSFMIAMQSMIDTSQTFNLDRSKISLPDFDDELKKVQKDEQNQRTELTVLSQDRNDWDDIFEEFKDISFAQLQSIIDSYKTKNAVAVYKKIGKLINEAETTLSSNVLLETVLQMVYKHQKQELEKELLDFLGTGNIDLVSLLLQHRRMIVATPIETTILLIKNAVNSTPEFLTQQDIRNQVLKSAEDAKNRKLNPATKIIKYPHVFRKYEAGSTTAMAFAGQKFTLPVGTTRMSYNTHEEIIIPAADQASNKNYLYTKLLKISDLDHFCKTVFPYETLNQIQSLVYPVAYKTNENMLICAPTGAGKTDIALLTIINTIKQFSVVNGENEIDIQYDDFKVIYVAPLKALAAEIVDKFSKKLAPFNIQVRELTGDMQLTKAEILATQVIVTTPEKWDVVTRKANGDNDLVSKVKLLIIDEVHLLHEDRGSVIETLVARTLRQVESSQSMIRIIGLSATLPNFMDVADFLGVNRQIGMFYFDQSFRPKPLEQQLLGCRGKAGSRQSKENIDKVAYDKLSEMIQRGYQVMVFVHSRKETVKSARNFIKLAESNHEVDLFAPDPIEKDKYSRSLVKNRDKDMKEIFQFGFGIHHAGMARSDRNLTEKMFKDGAIKVLCCTATLAWGVNLPADCVIIKGTQVYDSKKGGFIDLGISDVIQIFGRGGRPGFGSANGTGILCTSNDRLDHYVSLITQQHPIESRFGSKLVDNLNAEISLGSVTNVDEAIEWLGYTYMFVRMRKNPFTYGIDWEEIANDPQLYERRRKMIVVAARRLHALQMIVFDEVSMHFIAKDLGRVSSDFYLLNESVEIFNQMCDPRATEADVLSMISMSSEFDGIKFREEESKELKRLSDESVECQIGSQLDTPQGKANVLLQAYISQTRIFDSALSSDSNYVAQNSVRICRALFLIGVNRRWGKFSNVMLNICKSIEKRLWAFDHPLCQFDLPENIIRRIRDTKPSMEHLLELEADELGELVHNKKAGSRLYKILSRFPKINIEAEIFPITTNVMRIHIALGPDFVWDSRIHGDAQFFWVFVEESDKSQILHFEKFILNRRQLNNQHEMDFMIPLSDPLPPQVVVKVVSDTWIGCESTHAISFQHLIRPFNETLQTKLLKLRPLPTSALQNPLIESIYPFKYFNPMQTMTFYTLYNTNENAFVGSPTGSGKTIVAELAIWHAFKTFPGKKIVYIAPMKALVRERVDDWRKKITPVTGDKVVELTGDSLPDPKDVHDATIVITTPEKFDGISRNWQTRKFVQDVSLIIMDEIHLLASDRGPILEMIVSRMNYISSQTKQPVRLLGMSTAVSNAYDMAGWLGVKDHGLYNFPSSVRPVPLKMYIDGFPDNLAFCPLMKTMNKPVFMAIKQHSPDKPALIFVASRRQTRLTALDLIHLCGMEDNPRRFLNIDDEEELQYYLSQVTDDTLKLSLQFGIGLHHAGLVQKDRSISHQLFQKNKIQILIATSTLAWGVNLPAHLVIIKGTQFFDAKIEGYRDMDLTDILQMMGRAGRPAYDTTGTAIVYTKESKKMFYKHFLNVGFPVESSLHKVLDDHLGAEITSGSITNKQEALDFLSWTFLFRRAHHNPTYYGIEDDTSTAGVSEHLSSLIDSTLENLRESQCVLLHGDDIVATPFLSISSYYYISHLTIRQLLKQIHDHATFQEVLRWLSLAVEYNELPVRGGEIIMNEEMSQQSRYSVESTFTDEFELPMWDPHVKTFLLLQAHLSRVDLPIADYIQDTVSVLDQSLRILQAYIDVASELGYFHTVLTMIKMMQCIKQGYWYEDDPVSVLPGLQLRRIKDYTFSEQGFIEMTPQQKKKKLLTLEEIGRFGYKKLLNVFDQLTFGMTESEDTKKRFVSVCQRLPVLEGMKFEEQENNEVLTFYSKHLSSKHNNGFEVYCDKFPKIQKELWFLIGHKGDELLMIKRCQPKQMNKEVIIHCDLFIPEEIRGEELQFSLINDALGLRYDMVHKLIS</sequence>
<comment type="function">
    <text evidence="3 4 7 8 9 10">Involved in activation of the ribosome quality control (RQC) pathway, a pathway that degrades nascent peptide chains during problematic translation (PubMed:28223409, PubMed:28757607, PubMed:30893611, PubMed:32203490). Drives the splitting of stalled ribosomes that are polyubiquitinated in a HEL2-dependent manner, as part of the ribosome quality control trigger (RQT) complex (PubMed:28757607, PubMed:30893611, PubMed:32203490). Also represses the translation of non-poly(A) mRNAs together with SKI2 (PubMed:10922069). May block translation by inhibiting translation initiation factor 5B (FUN12) action on mRNAs lacking a 3' poly(A) structure (PubMed:11438647). Involved in antiviral defense, preventing L-A dsRNA virus propagation by specifically blocking translation of viral mRNAs (PubMed:10922069).</text>
</comment>
<comment type="catalytic activity">
    <reaction evidence="14 15 16">
        <text>ATP + H2O = ADP + phosphate + H(+)</text>
        <dbReference type="Rhea" id="RHEA:13065"/>
        <dbReference type="ChEBI" id="CHEBI:15377"/>
        <dbReference type="ChEBI" id="CHEBI:15378"/>
        <dbReference type="ChEBI" id="CHEBI:30616"/>
        <dbReference type="ChEBI" id="CHEBI:43474"/>
        <dbReference type="ChEBI" id="CHEBI:456216"/>
        <dbReference type="EC" id="3.6.4.13"/>
    </reaction>
</comment>
<comment type="subunit">
    <text evidence="7 8 10">Component of the RQT (ribosome quality control trigger) complex, composed of SLH1, CUE3, and RQT4 (PubMed:28757607, PubMed:32203490). Interacts with CUE3 (PubMed:28757607). Interacts with RQT4 (PubMed:28757607). Interacts with HEL2 (PubMed:28223409, PubMed:28757607). Associates with translating ribosomes (PubMed:28757607).</text>
</comment>
<comment type="subcellular location">
    <subcellularLocation>
        <location evidence="5">Cytoplasm</location>
        <location evidence="5">Cytosol</location>
    </subcellularLocation>
</comment>
<comment type="disruption phenotype">
    <text evidence="7 8">Defective activation of the ribosome quality control (RQC) pathway (PubMed:28223409, PubMed:28757607). Mildly defective ribosome stalling induced by RNA arrest sequences (PubMed:28223409). Sensitive to anisomycin (stalls ribosomes in the rotated state) (PubMed:28757607).</text>
</comment>
<comment type="miscellaneous">
    <text evidence="6">Present with 486 molecules/cell in log phase SD medium.</text>
</comment>
<comment type="similarity">
    <text evidence="13">Belongs to the helicase family. SKI2 subfamily.</text>
</comment>
<proteinExistence type="evidence at protein level"/>